<sequence length="733" mass="81863">MTKASVVDQSAPAYAPKRLLAEARAASKVNIEQVFAFLEGSPEKAALTNELLAEFAADPAITQGPEYYDLTKAEQREQTVKKIARLALYLENDIKLARKQHHKDVVRDLQSPDAPMVTMSDMERFEKRSTLVALIDPQLATRLGVNLSLFGNAVRGNGTDEQIKYWLQERGLIFVKGIYGCFAMTELGHGSNVANLQTRATYDPASDSFVIQTPDLVATKWWIGGAAHSATHSTVYARLIVEGKDYGVKVFVVPLRNPKTMELLAGISIGDIGSKMGRDGIDNGWIQFNNVRIPREYMLSRFTKVIPGNPPKVEMEPLLDSISGYAALLSGRVSMVLDSYRFGARFSTIATRYAFGRQQFGDPTNETQLIEYPLHQFRVLPQLAIIYMMAPGAMKLMDTYNSCLGELYGAGDDKKKLTTVSARMKDLFVESASLKATCTWLTSTLIDELRQTCGGHGYSSYNGFGKAYNDWVVQCTWEGDNNVLCLTSGKSLLKKFAGIVRGKKVTICDTSMDYLRMDYIQKVVMGGTKKVSNLSTLPDYYQIWSVILVKYLKRCAETVRDNNDPESVSKLLVSIAKFHAFYSMLQEFHRKLASDQSHVGDAATKEVLWKVYKLSSLYFIDKFSGEFQQLKVMSPDQMTNVQEQMLAILPEIKTHAIRLTDAFHLPDAVINSSIGNYDGDIYHNYFNDVTRVAAKDKAPGVPPYADMLVNFLARGDQFDNLNISETSFKNLGK</sequence>
<accession>Q756A9</accession>
<evidence type="ECO:0000250" key="1"/>
<evidence type="ECO:0000305" key="2"/>
<gene>
    <name type="primary">POX1</name>
    <name type="ordered locus">AER358C</name>
</gene>
<proteinExistence type="inferred from homology"/>
<feature type="chain" id="PRO_0000204691" description="Acyl-coenzyme A oxidase">
    <location>
        <begin position="1"/>
        <end position="733"/>
    </location>
</feature>
<comment type="catalytic activity">
    <reaction>
        <text>a 2,3-saturated acyl-CoA + O2 = a (2E)-enoyl-CoA + H2O2</text>
        <dbReference type="Rhea" id="RHEA:38959"/>
        <dbReference type="ChEBI" id="CHEBI:15379"/>
        <dbReference type="ChEBI" id="CHEBI:16240"/>
        <dbReference type="ChEBI" id="CHEBI:58856"/>
        <dbReference type="ChEBI" id="CHEBI:65111"/>
        <dbReference type="EC" id="1.3.3.6"/>
    </reaction>
</comment>
<comment type="cofactor">
    <cofactor evidence="1">
        <name>FAD</name>
        <dbReference type="ChEBI" id="CHEBI:57692"/>
    </cofactor>
</comment>
<comment type="pathway">
    <text>Lipid metabolism; peroxisomal fatty acid beta-oxidation.</text>
</comment>
<comment type="subcellular location">
    <subcellularLocation>
        <location evidence="1">Peroxisome</location>
    </subcellularLocation>
</comment>
<comment type="similarity">
    <text evidence="2">Belongs to the acyl-CoA oxidase family.</text>
</comment>
<protein>
    <recommendedName>
        <fullName>Acyl-coenzyme A oxidase</fullName>
        <shortName>Acyl-CoA oxidase</shortName>
        <ecNumber>1.3.3.6</ecNumber>
    </recommendedName>
</protein>
<dbReference type="EC" id="1.3.3.6"/>
<dbReference type="EMBL" id="AE016818">
    <property type="protein sequence ID" value="AAS53038.2"/>
    <property type="molecule type" value="Genomic_DNA"/>
</dbReference>
<dbReference type="RefSeq" id="NP_985214.2">
    <property type="nucleotide sequence ID" value="NM_210568.2"/>
</dbReference>
<dbReference type="SMR" id="Q756A9"/>
<dbReference type="FunCoup" id="Q756A9">
    <property type="interactions" value="423"/>
</dbReference>
<dbReference type="STRING" id="284811.Q756A9"/>
<dbReference type="EnsemblFungi" id="AAS53038">
    <property type="protein sequence ID" value="AAS53038"/>
    <property type="gene ID" value="AGOS_AER358C"/>
</dbReference>
<dbReference type="GeneID" id="4621430"/>
<dbReference type="KEGG" id="ago:AGOS_AER358C"/>
<dbReference type="eggNOG" id="KOG0136">
    <property type="taxonomic scope" value="Eukaryota"/>
</dbReference>
<dbReference type="HOGENOM" id="CLU_014629_3_1_1"/>
<dbReference type="InParanoid" id="Q756A9"/>
<dbReference type="OMA" id="SINKRFA"/>
<dbReference type="OrthoDB" id="538336at2759"/>
<dbReference type="UniPathway" id="UPA00661"/>
<dbReference type="Proteomes" id="UP000000591">
    <property type="component" value="Chromosome V"/>
</dbReference>
<dbReference type="GO" id="GO:0005782">
    <property type="term" value="C:peroxisomal matrix"/>
    <property type="evidence" value="ECO:0007669"/>
    <property type="project" value="EnsemblFungi"/>
</dbReference>
<dbReference type="GO" id="GO:0005777">
    <property type="term" value="C:peroxisome"/>
    <property type="evidence" value="ECO:0000318"/>
    <property type="project" value="GO_Central"/>
</dbReference>
<dbReference type="GO" id="GO:0003997">
    <property type="term" value="F:acyl-CoA oxidase activity"/>
    <property type="evidence" value="ECO:0000318"/>
    <property type="project" value="GO_Central"/>
</dbReference>
<dbReference type="GO" id="GO:0071949">
    <property type="term" value="F:FAD binding"/>
    <property type="evidence" value="ECO:0007669"/>
    <property type="project" value="InterPro"/>
</dbReference>
<dbReference type="GO" id="GO:0005504">
    <property type="term" value="F:fatty acid binding"/>
    <property type="evidence" value="ECO:0000318"/>
    <property type="project" value="GO_Central"/>
</dbReference>
<dbReference type="GO" id="GO:0050660">
    <property type="term" value="F:flavin adenine dinucleotide binding"/>
    <property type="evidence" value="ECO:0000318"/>
    <property type="project" value="GO_Central"/>
</dbReference>
<dbReference type="GO" id="GO:0033540">
    <property type="term" value="P:fatty acid beta-oxidation using acyl-CoA oxidase"/>
    <property type="evidence" value="ECO:0000318"/>
    <property type="project" value="GO_Central"/>
</dbReference>
<dbReference type="FunFam" id="1.20.140.10:FF:000015">
    <property type="entry name" value="Acyl-coenzyme A oxidase"/>
    <property type="match status" value="1"/>
</dbReference>
<dbReference type="FunFam" id="1.20.140.10:FF:000041">
    <property type="entry name" value="Acyl-coenzyme A oxidase"/>
    <property type="match status" value="1"/>
</dbReference>
<dbReference type="FunFam" id="2.40.110.10:FF:000003">
    <property type="entry name" value="Acyl-coenzyme A oxidase"/>
    <property type="match status" value="1"/>
</dbReference>
<dbReference type="Gene3D" id="1.10.540.10">
    <property type="entry name" value="Acyl-CoA dehydrogenase/oxidase, N-terminal domain"/>
    <property type="match status" value="1"/>
</dbReference>
<dbReference type="Gene3D" id="2.40.110.10">
    <property type="entry name" value="Butyryl-CoA Dehydrogenase, subunit A, domain 2"/>
    <property type="match status" value="1"/>
</dbReference>
<dbReference type="Gene3D" id="1.20.140.10">
    <property type="entry name" value="Butyryl-CoA Dehydrogenase, subunit A, domain 3"/>
    <property type="match status" value="2"/>
</dbReference>
<dbReference type="InterPro" id="IPR055060">
    <property type="entry name" value="ACOX_C_alpha1"/>
</dbReference>
<dbReference type="InterPro" id="IPR029320">
    <property type="entry name" value="Acyl-CoA_ox_N"/>
</dbReference>
<dbReference type="InterPro" id="IPR006091">
    <property type="entry name" value="Acyl-CoA_Oxase/DH_mid-dom"/>
</dbReference>
<dbReference type="InterPro" id="IPR046373">
    <property type="entry name" value="Acyl-CoA_Oxase/DH_mid-dom_sf"/>
</dbReference>
<dbReference type="InterPro" id="IPR012258">
    <property type="entry name" value="Acyl-CoA_oxidase"/>
</dbReference>
<dbReference type="InterPro" id="IPR002655">
    <property type="entry name" value="Acyl-CoA_oxidase_C"/>
</dbReference>
<dbReference type="InterPro" id="IPR036250">
    <property type="entry name" value="AcylCo_DH-like_C"/>
</dbReference>
<dbReference type="InterPro" id="IPR037069">
    <property type="entry name" value="AcylCoA_DH/ox_N_sf"/>
</dbReference>
<dbReference type="InterPro" id="IPR009100">
    <property type="entry name" value="AcylCoA_DH/oxidase_NM_dom_sf"/>
</dbReference>
<dbReference type="PANTHER" id="PTHR10909:SF352">
    <property type="entry name" value="ACYL-COENZYME A OXIDASE-LIKE PROTEIN"/>
    <property type="match status" value="1"/>
</dbReference>
<dbReference type="PANTHER" id="PTHR10909">
    <property type="entry name" value="ELECTRON TRANSPORT OXIDOREDUCTASE"/>
    <property type="match status" value="1"/>
</dbReference>
<dbReference type="Pfam" id="PF01756">
    <property type="entry name" value="ACOX"/>
    <property type="match status" value="1"/>
</dbReference>
<dbReference type="Pfam" id="PF22924">
    <property type="entry name" value="ACOX_C_alpha1"/>
    <property type="match status" value="1"/>
</dbReference>
<dbReference type="Pfam" id="PF02770">
    <property type="entry name" value="Acyl-CoA_dh_M"/>
    <property type="match status" value="1"/>
</dbReference>
<dbReference type="Pfam" id="PF14749">
    <property type="entry name" value="Acyl-CoA_ox_N"/>
    <property type="match status" value="1"/>
</dbReference>
<dbReference type="PIRSF" id="PIRSF000168">
    <property type="entry name" value="Acyl-CoA_oxidase"/>
    <property type="match status" value="1"/>
</dbReference>
<dbReference type="SUPFAM" id="SSF47203">
    <property type="entry name" value="Acyl-CoA dehydrogenase C-terminal domain-like"/>
    <property type="match status" value="2"/>
</dbReference>
<dbReference type="SUPFAM" id="SSF56645">
    <property type="entry name" value="Acyl-CoA dehydrogenase NM domain-like"/>
    <property type="match status" value="1"/>
</dbReference>
<organism>
    <name type="scientific">Eremothecium gossypii (strain ATCC 10895 / CBS 109.51 / FGSC 9923 / NRRL Y-1056)</name>
    <name type="common">Yeast</name>
    <name type="synonym">Ashbya gossypii</name>
    <dbReference type="NCBI Taxonomy" id="284811"/>
    <lineage>
        <taxon>Eukaryota</taxon>
        <taxon>Fungi</taxon>
        <taxon>Dikarya</taxon>
        <taxon>Ascomycota</taxon>
        <taxon>Saccharomycotina</taxon>
        <taxon>Saccharomycetes</taxon>
        <taxon>Saccharomycetales</taxon>
        <taxon>Saccharomycetaceae</taxon>
        <taxon>Eremothecium</taxon>
    </lineage>
</organism>
<name>ACOX_EREGS</name>
<keyword id="KW-0274">FAD</keyword>
<keyword id="KW-0276">Fatty acid metabolism</keyword>
<keyword id="KW-0285">Flavoprotein</keyword>
<keyword id="KW-0443">Lipid metabolism</keyword>
<keyword id="KW-0560">Oxidoreductase</keyword>
<keyword id="KW-0576">Peroxisome</keyword>
<keyword id="KW-1185">Reference proteome</keyword>
<reference key="1">
    <citation type="journal article" date="2004" name="Science">
        <title>The Ashbya gossypii genome as a tool for mapping the ancient Saccharomyces cerevisiae genome.</title>
        <authorList>
            <person name="Dietrich F.S."/>
            <person name="Voegeli S."/>
            <person name="Brachat S."/>
            <person name="Lerch A."/>
            <person name="Gates K."/>
            <person name="Steiner S."/>
            <person name="Mohr C."/>
            <person name="Poehlmann R."/>
            <person name="Luedi P."/>
            <person name="Choi S."/>
            <person name="Wing R.A."/>
            <person name="Flavier A."/>
            <person name="Gaffney T.D."/>
            <person name="Philippsen P."/>
        </authorList>
    </citation>
    <scope>NUCLEOTIDE SEQUENCE [LARGE SCALE GENOMIC DNA]</scope>
    <source>
        <strain>ATCC 10895 / CBS 109.51 / FGSC 9923 / NRRL Y-1056</strain>
    </source>
</reference>
<reference key="2">
    <citation type="journal article" date="2013" name="G3 (Bethesda)">
        <title>Genomes of Ashbya fungi isolated from insects reveal four mating-type loci, numerous translocations, lack of transposons, and distinct gene duplications.</title>
        <authorList>
            <person name="Dietrich F.S."/>
            <person name="Voegeli S."/>
            <person name="Kuo S."/>
            <person name="Philippsen P."/>
        </authorList>
    </citation>
    <scope>GENOME REANNOTATION</scope>
    <scope>SEQUENCE REVISION TO C-TERMINUS</scope>
    <source>
        <strain>ATCC 10895 / CBS 109.51 / FGSC 9923 / NRRL Y-1056</strain>
    </source>
</reference>